<organism>
    <name type="scientific">Escherichia coli (strain K12 / DH10B)</name>
    <dbReference type="NCBI Taxonomy" id="316385"/>
    <lineage>
        <taxon>Bacteria</taxon>
        <taxon>Pseudomonadati</taxon>
        <taxon>Pseudomonadota</taxon>
        <taxon>Gammaproteobacteria</taxon>
        <taxon>Enterobacterales</taxon>
        <taxon>Enterobacteriaceae</taxon>
        <taxon>Escherichia</taxon>
    </lineage>
</organism>
<sequence>MLNQLDNLTERVRGSNKLVDRWLHVRKHLLVAYYNLVGIKPGKESYMRLNEKALDDFCQSLVDYLSAGHFSIYERILHKLEGNGQLARAAKIWPQLEANTQQIMDYYDSSLETAIDHDNYLEFQQVLSDIGEALEARFVLEDKLILLVLDAARVKHPA</sequence>
<name>RSD_ECODH</name>
<keyword id="KW-0963">Cytoplasm</keyword>
<keyword id="KW-0804">Transcription</keyword>
<keyword id="KW-0805">Transcription regulation</keyword>
<gene>
    <name evidence="1" type="primary">rsd</name>
    <name type="ordered locus">ECDH10B_4184</name>
</gene>
<proteinExistence type="inferred from homology"/>
<feature type="chain" id="PRO_1000138192" description="Regulator of sigma D">
    <location>
        <begin position="1"/>
        <end position="158"/>
    </location>
</feature>
<comment type="function">
    <text evidence="1">Binds RpoD and negatively regulates RpoD-mediated transcription activation by preventing the interaction between the primary sigma factor RpoD with the catalytic core of the RNA polymerase and with promoter DNA. May be involved in replacement of the RNA polymerase sigma subunit from RpoD to RpoS during the transition from exponential growth to the stationary phase.</text>
</comment>
<comment type="subunit">
    <text evidence="1">Interacts with RpoD.</text>
</comment>
<comment type="subcellular location">
    <subcellularLocation>
        <location evidence="1">Cytoplasm</location>
    </subcellularLocation>
</comment>
<comment type="similarity">
    <text evidence="1">Belongs to the Rsd/AlgQ family.</text>
</comment>
<protein>
    <recommendedName>
        <fullName evidence="1">Regulator of sigma D</fullName>
    </recommendedName>
</protein>
<dbReference type="EMBL" id="CP000948">
    <property type="protein sequence ID" value="ACB04998.1"/>
    <property type="molecule type" value="Genomic_DNA"/>
</dbReference>
<dbReference type="RefSeq" id="WP_000934302.1">
    <property type="nucleotide sequence ID" value="NC_010473.1"/>
</dbReference>
<dbReference type="SMR" id="B1XBZ8"/>
<dbReference type="GeneID" id="75205513"/>
<dbReference type="KEGG" id="ecd:ECDH10B_4184"/>
<dbReference type="HOGENOM" id="CLU_142729_0_0_6"/>
<dbReference type="GO" id="GO:0005737">
    <property type="term" value="C:cytoplasm"/>
    <property type="evidence" value="ECO:0007669"/>
    <property type="project" value="UniProtKB-SubCell"/>
</dbReference>
<dbReference type="GO" id="GO:0006355">
    <property type="term" value="P:regulation of DNA-templated transcription"/>
    <property type="evidence" value="ECO:0007669"/>
    <property type="project" value="InterPro"/>
</dbReference>
<dbReference type="FunFam" id="1.20.120.1370:FF:000001">
    <property type="entry name" value="Regulator of sigma D"/>
    <property type="match status" value="1"/>
</dbReference>
<dbReference type="Gene3D" id="1.20.120.1370">
    <property type="entry name" value="Regulator of RNA polymerase sigma(70) subunit, domain 4"/>
    <property type="match status" value="1"/>
</dbReference>
<dbReference type="HAMAP" id="MF_01181">
    <property type="entry name" value="Rsd"/>
    <property type="match status" value="1"/>
</dbReference>
<dbReference type="InterPro" id="IPR038309">
    <property type="entry name" value="Rsd/AlgQ_sf"/>
</dbReference>
<dbReference type="InterPro" id="IPR023785">
    <property type="entry name" value="Sigma70_reg_Rsd"/>
</dbReference>
<dbReference type="InterPro" id="IPR007448">
    <property type="entry name" value="Sigma70_reg_Rsd_AlgQ"/>
</dbReference>
<dbReference type="NCBIfam" id="NF008723">
    <property type="entry name" value="PRK11718.1"/>
    <property type="match status" value="1"/>
</dbReference>
<dbReference type="Pfam" id="PF04353">
    <property type="entry name" value="Rsd_AlgQ"/>
    <property type="match status" value="1"/>
</dbReference>
<dbReference type="PIRSF" id="PIRSF016548">
    <property type="entry name" value="Rsd_AlgQ"/>
    <property type="match status" value="1"/>
</dbReference>
<evidence type="ECO:0000255" key="1">
    <source>
        <dbReference type="HAMAP-Rule" id="MF_01181"/>
    </source>
</evidence>
<accession>B1XBZ8</accession>
<reference key="1">
    <citation type="journal article" date="2008" name="J. Bacteriol.">
        <title>The complete genome sequence of Escherichia coli DH10B: insights into the biology of a laboratory workhorse.</title>
        <authorList>
            <person name="Durfee T."/>
            <person name="Nelson R."/>
            <person name="Baldwin S."/>
            <person name="Plunkett G. III"/>
            <person name="Burland V."/>
            <person name="Mau B."/>
            <person name="Petrosino J.F."/>
            <person name="Qin X."/>
            <person name="Muzny D.M."/>
            <person name="Ayele M."/>
            <person name="Gibbs R.A."/>
            <person name="Csorgo B."/>
            <person name="Posfai G."/>
            <person name="Weinstock G.M."/>
            <person name="Blattner F.R."/>
        </authorList>
    </citation>
    <scope>NUCLEOTIDE SEQUENCE [LARGE SCALE GENOMIC DNA]</scope>
    <source>
        <strain>K12 / DH10B</strain>
    </source>
</reference>